<evidence type="ECO:0000250" key="1"/>
<evidence type="ECO:0000255" key="2">
    <source>
        <dbReference type="HAMAP-Rule" id="MF_00103"/>
    </source>
</evidence>
<dbReference type="EC" id="3.2.2.23" evidence="2"/>
<dbReference type="EC" id="4.2.99.18" evidence="2"/>
<dbReference type="EMBL" id="CP000250">
    <property type="protein sequence ID" value="ABD05330.1"/>
    <property type="molecule type" value="Genomic_DNA"/>
</dbReference>
<dbReference type="RefSeq" id="WP_011439520.1">
    <property type="nucleotide sequence ID" value="NC_007778.1"/>
</dbReference>
<dbReference type="SMR" id="Q2J2I0"/>
<dbReference type="STRING" id="316058.RPB_0619"/>
<dbReference type="KEGG" id="rpb:RPB_0619"/>
<dbReference type="eggNOG" id="COG0266">
    <property type="taxonomic scope" value="Bacteria"/>
</dbReference>
<dbReference type="HOGENOM" id="CLU_038423_1_1_5"/>
<dbReference type="OrthoDB" id="9800855at2"/>
<dbReference type="Proteomes" id="UP000008809">
    <property type="component" value="Chromosome"/>
</dbReference>
<dbReference type="GO" id="GO:0034039">
    <property type="term" value="F:8-oxo-7,8-dihydroguanine DNA N-glycosylase activity"/>
    <property type="evidence" value="ECO:0007669"/>
    <property type="project" value="TreeGrafter"/>
</dbReference>
<dbReference type="GO" id="GO:0140078">
    <property type="term" value="F:class I DNA-(apurinic or apyrimidinic site) endonuclease activity"/>
    <property type="evidence" value="ECO:0007669"/>
    <property type="project" value="UniProtKB-EC"/>
</dbReference>
<dbReference type="GO" id="GO:0003684">
    <property type="term" value="F:damaged DNA binding"/>
    <property type="evidence" value="ECO:0007669"/>
    <property type="project" value="InterPro"/>
</dbReference>
<dbReference type="GO" id="GO:0008270">
    <property type="term" value="F:zinc ion binding"/>
    <property type="evidence" value="ECO:0007669"/>
    <property type="project" value="UniProtKB-UniRule"/>
</dbReference>
<dbReference type="GO" id="GO:0006284">
    <property type="term" value="P:base-excision repair"/>
    <property type="evidence" value="ECO:0007669"/>
    <property type="project" value="InterPro"/>
</dbReference>
<dbReference type="CDD" id="cd08966">
    <property type="entry name" value="EcFpg-like_N"/>
    <property type="match status" value="1"/>
</dbReference>
<dbReference type="FunFam" id="1.10.8.50:FF:000003">
    <property type="entry name" value="Formamidopyrimidine-DNA glycosylase"/>
    <property type="match status" value="1"/>
</dbReference>
<dbReference type="Gene3D" id="1.10.8.50">
    <property type="match status" value="1"/>
</dbReference>
<dbReference type="Gene3D" id="3.20.190.10">
    <property type="entry name" value="MutM-like, N-terminal"/>
    <property type="match status" value="1"/>
</dbReference>
<dbReference type="HAMAP" id="MF_00103">
    <property type="entry name" value="Fapy_DNA_glycosyl"/>
    <property type="match status" value="1"/>
</dbReference>
<dbReference type="InterPro" id="IPR015886">
    <property type="entry name" value="DNA_glyclase/AP_lyase_DNA-bd"/>
</dbReference>
<dbReference type="InterPro" id="IPR015887">
    <property type="entry name" value="DNA_glyclase_Znf_dom_DNA_BS"/>
</dbReference>
<dbReference type="InterPro" id="IPR020629">
    <property type="entry name" value="Formamido-pyr_DNA_Glyclase"/>
</dbReference>
<dbReference type="InterPro" id="IPR012319">
    <property type="entry name" value="FPG_cat"/>
</dbReference>
<dbReference type="InterPro" id="IPR035937">
    <property type="entry name" value="MutM-like_N-ter"/>
</dbReference>
<dbReference type="InterPro" id="IPR010979">
    <property type="entry name" value="Ribosomal_uS13-like_H2TH"/>
</dbReference>
<dbReference type="InterPro" id="IPR000214">
    <property type="entry name" value="Znf_DNA_glyclase/AP_lyase"/>
</dbReference>
<dbReference type="NCBIfam" id="TIGR00577">
    <property type="entry name" value="fpg"/>
    <property type="match status" value="1"/>
</dbReference>
<dbReference type="NCBIfam" id="NF002211">
    <property type="entry name" value="PRK01103.1"/>
    <property type="match status" value="1"/>
</dbReference>
<dbReference type="PANTHER" id="PTHR22993">
    <property type="entry name" value="FORMAMIDOPYRIMIDINE-DNA GLYCOSYLASE"/>
    <property type="match status" value="1"/>
</dbReference>
<dbReference type="PANTHER" id="PTHR22993:SF9">
    <property type="entry name" value="FORMAMIDOPYRIMIDINE-DNA GLYCOSYLASE"/>
    <property type="match status" value="1"/>
</dbReference>
<dbReference type="Pfam" id="PF01149">
    <property type="entry name" value="Fapy_DNA_glyco"/>
    <property type="match status" value="1"/>
</dbReference>
<dbReference type="Pfam" id="PF06831">
    <property type="entry name" value="H2TH"/>
    <property type="match status" value="1"/>
</dbReference>
<dbReference type="SMART" id="SM00898">
    <property type="entry name" value="Fapy_DNA_glyco"/>
    <property type="match status" value="1"/>
</dbReference>
<dbReference type="SMART" id="SM01232">
    <property type="entry name" value="H2TH"/>
    <property type="match status" value="1"/>
</dbReference>
<dbReference type="SUPFAM" id="SSF57716">
    <property type="entry name" value="Glucocorticoid receptor-like (DNA-binding domain)"/>
    <property type="match status" value="1"/>
</dbReference>
<dbReference type="SUPFAM" id="SSF81624">
    <property type="entry name" value="N-terminal domain of MutM-like DNA repair proteins"/>
    <property type="match status" value="1"/>
</dbReference>
<dbReference type="SUPFAM" id="SSF46946">
    <property type="entry name" value="S13-like H2TH domain"/>
    <property type="match status" value="1"/>
</dbReference>
<dbReference type="PROSITE" id="PS51068">
    <property type="entry name" value="FPG_CAT"/>
    <property type="match status" value="1"/>
</dbReference>
<dbReference type="PROSITE" id="PS01242">
    <property type="entry name" value="ZF_FPG_1"/>
    <property type="match status" value="1"/>
</dbReference>
<dbReference type="PROSITE" id="PS51066">
    <property type="entry name" value="ZF_FPG_2"/>
    <property type="match status" value="1"/>
</dbReference>
<sequence length="293" mass="32026">MPELPEVETVRLGLQPAMEGFRIDRAMANRCDLRFPFQPDFAARLTGQTITGLGRRAKYLLADLSSGDVLLMHLGMSGSFRVVNGAGDATPGEFHHPRSEDRTHDHVVFEMSSGARVIFNDPRRFGFMKIFARAAIDDEPHLKGLGPEPLGNAFDAAMLARACAGKQTSLKAALLDQRVVAGLGNIYVCEALWRAHLSPKRKASTLADRKGAPTDRAVRLVDAIRAVLGDAIKAGGSSLRDHRQTSGELGYFQHSFAVYDREGERCRTPGCNGTVKRLVQNGRSTFWCSGCQT</sequence>
<reference key="1">
    <citation type="submission" date="2006-01" db="EMBL/GenBank/DDBJ databases">
        <title>Complete sequence of Rhodopseudomonas palustris HaA2.</title>
        <authorList>
            <consortium name="US DOE Joint Genome Institute"/>
            <person name="Copeland A."/>
            <person name="Lucas S."/>
            <person name="Lapidus A."/>
            <person name="Barry K."/>
            <person name="Detter J.C."/>
            <person name="Glavina T."/>
            <person name="Hammon N."/>
            <person name="Israni S."/>
            <person name="Pitluck S."/>
            <person name="Chain P."/>
            <person name="Malfatti S."/>
            <person name="Shin M."/>
            <person name="Vergez L."/>
            <person name="Schmutz J."/>
            <person name="Larimer F."/>
            <person name="Land M."/>
            <person name="Hauser L."/>
            <person name="Pelletier D.A."/>
            <person name="Kyrpides N."/>
            <person name="Anderson I."/>
            <person name="Oda Y."/>
            <person name="Harwood C.S."/>
            <person name="Richardson P."/>
        </authorList>
    </citation>
    <scope>NUCLEOTIDE SEQUENCE [LARGE SCALE GENOMIC DNA]</scope>
    <source>
        <strain>HaA2</strain>
    </source>
</reference>
<gene>
    <name evidence="2" type="primary">mutM</name>
    <name evidence="2" type="synonym">fpg</name>
    <name type="ordered locus">RPB_0619</name>
</gene>
<name>FPG_RHOP2</name>
<comment type="function">
    <text evidence="2">Involved in base excision repair of DNA damaged by oxidation or by mutagenic agents. Acts as a DNA glycosylase that recognizes and removes damaged bases. Has a preference for oxidized purines, such as 7,8-dihydro-8-oxoguanine (8-oxoG). Has AP (apurinic/apyrimidinic) lyase activity and introduces nicks in the DNA strand. Cleaves the DNA backbone by beta-delta elimination to generate a single-strand break at the site of the removed base with both 3'- and 5'-phosphates.</text>
</comment>
<comment type="catalytic activity">
    <reaction evidence="2">
        <text>Hydrolysis of DNA containing ring-opened 7-methylguanine residues, releasing 2,6-diamino-4-hydroxy-5-(N-methyl)formamidopyrimidine.</text>
        <dbReference type="EC" id="3.2.2.23"/>
    </reaction>
</comment>
<comment type="catalytic activity">
    <reaction evidence="2">
        <text>2'-deoxyribonucleotide-(2'-deoxyribose 5'-phosphate)-2'-deoxyribonucleotide-DNA = a 3'-end 2'-deoxyribonucleotide-(2,3-dehydro-2,3-deoxyribose 5'-phosphate)-DNA + a 5'-end 5'-phospho-2'-deoxyribonucleoside-DNA + H(+)</text>
        <dbReference type="Rhea" id="RHEA:66592"/>
        <dbReference type="Rhea" id="RHEA-COMP:13180"/>
        <dbReference type="Rhea" id="RHEA-COMP:16897"/>
        <dbReference type="Rhea" id="RHEA-COMP:17067"/>
        <dbReference type="ChEBI" id="CHEBI:15378"/>
        <dbReference type="ChEBI" id="CHEBI:136412"/>
        <dbReference type="ChEBI" id="CHEBI:157695"/>
        <dbReference type="ChEBI" id="CHEBI:167181"/>
        <dbReference type="EC" id="4.2.99.18"/>
    </reaction>
</comment>
<comment type="cofactor">
    <cofactor evidence="2">
        <name>Zn(2+)</name>
        <dbReference type="ChEBI" id="CHEBI:29105"/>
    </cofactor>
    <text evidence="2">Binds 1 zinc ion per subunit.</text>
</comment>
<comment type="subunit">
    <text evidence="2">Monomer.</text>
</comment>
<comment type="similarity">
    <text evidence="2">Belongs to the FPG family.</text>
</comment>
<proteinExistence type="inferred from homology"/>
<accession>Q2J2I0</accession>
<organism>
    <name type="scientific">Rhodopseudomonas palustris (strain HaA2)</name>
    <dbReference type="NCBI Taxonomy" id="316058"/>
    <lineage>
        <taxon>Bacteria</taxon>
        <taxon>Pseudomonadati</taxon>
        <taxon>Pseudomonadota</taxon>
        <taxon>Alphaproteobacteria</taxon>
        <taxon>Hyphomicrobiales</taxon>
        <taxon>Nitrobacteraceae</taxon>
        <taxon>Rhodopseudomonas</taxon>
    </lineage>
</organism>
<feature type="initiator methionine" description="Removed" evidence="1">
    <location>
        <position position="1"/>
    </location>
</feature>
<feature type="chain" id="PRO_1000008753" description="Formamidopyrimidine-DNA glycosylase">
    <location>
        <begin position="2"/>
        <end position="293"/>
    </location>
</feature>
<feature type="zinc finger region" description="FPG-type" evidence="2">
    <location>
        <begin position="257"/>
        <end position="293"/>
    </location>
</feature>
<feature type="active site" description="Schiff-base intermediate with DNA" evidence="2">
    <location>
        <position position="2"/>
    </location>
</feature>
<feature type="active site" description="Proton donor" evidence="2">
    <location>
        <position position="3"/>
    </location>
</feature>
<feature type="active site" description="Proton donor; for beta-elimination activity" evidence="2">
    <location>
        <position position="58"/>
    </location>
</feature>
<feature type="active site" description="Proton donor; for delta-elimination activity" evidence="2">
    <location>
        <position position="283"/>
    </location>
</feature>
<feature type="binding site" evidence="2">
    <location>
        <position position="104"/>
    </location>
    <ligand>
        <name>DNA</name>
        <dbReference type="ChEBI" id="CHEBI:16991"/>
    </ligand>
</feature>
<feature type="binding site" evidence="2">
    <location>
        <position position="123"/>
    </location>
    <ligand>
        <name>DNA</name>
        <dbReference type="ChEBI" id="CHEBI:16991"/>
    </ligand>
</feature>
<feature type="binding site" evidence="2">
    <location>
        <position position="166"/>
    </location>
    <ligand>
        <name>DNA</name>
        <dbReference type="ChEBI" id="CHEBI:16991"/>
    </ligand>
</feature>
<keyword id="KW-0227">DNA damage</keyword>
<keyword id="KW-0234">DNA repair</keyword>
<keyword id="KW-0238">DNA-binding</keyword>
<keyword id="KW-0326">Glycosidase</keyword>
<keyword id="KW-0378">Hydrolase</keyword>
<keyword id="KW-0456">Lyase</keyword>
<keyword id="KW-0479">Metal-binding</keyword>
<keyword id="KW-0511">Multifunctional enzyme</keyword>
<keyword id="KW-1185">Reference proteome</keyword>
<keyword id="KW-0862">Zinc</keyword>
<keyword id="KW-0863">Zinc-finger</keyword>
<protein>
    <recommendedName>
        <fullName evidence="2">Formamidopyrimidine-DNA glycosylase</fullName>
        <shortName evidence="2">Fapy-DNA glycosylase</shortName>
        <ecNumber evidence="2">3.2.2.23</ecNumber>
    </recommendedName>
    <alternativeName>
        <fullName evidence="2">DNA-(apurinic or apyrimidinic site) lyase MutM</fullName>
        <shortName evidence="2">AP lyase MutM</shortName>
        <ecNumber evidence="2">4.2.99.18</ecNumber>
    </alternativeName>
</protein>